<gene>
    <name evidence="1" type="primary">pncB</name>
    <name type="ordered locus">Rpic_0896</name>
</gene>
<dbReference type="EC" id="6.3.4.21" evidence="1"/>
<dbReference type="EMBL" id="CP001068">
    <property type="protein sequence ID" value="ACD26046.1"/>
    <property type="molecule type" value="Genomic_DNA"/>
</dbReference>
<dbReference type="SMR" id="B2U8V2"/>
<dbReference type="STRING" id="402626.Rpic_0896"/>
<dbReference type="KEGG" id="rpi:Rpic_0896"/>
<dbReference type="PATRIC" id="fig|402626.5.peg.2096"/>
<dbReference type="eggNOG" id="COG1488">
    <property type="taxonomic scope" value="Bacteria"/>
</dbReference>
<dbReference type="HOGENOM" id="CLU_030991_1_0_4"/>
<dbReference type="UniPathway" id="UPA00253">
    <property type="reaction ID" value="UER00457"/>
</dbReference>
<dbReference type="GO" id="GO:0005829">
    <property type="term" value="C:cytosol"/>
    <property type="evidence" value="ECO:0007669"/>
    <property type="project" value="TreeGrafter"/>
</dbReference>
<dbReference type="GO" id="GO:0004516">
    <property type="term" value="F:nicotinate phosphoribosyltransferase activity"/>
    <property type="evidence" value="ECO:0007669"/>
    <property type="project" value="UniProtKB-UniRule"/>
</dbReference>
<dbReference type="GO" id="GO:0034355">
    <property type="term" value="P:NAD biosynthetic process via the salvage pathway"/>
    <property type="evidence" value="ECO:0007669"/>
    <property type="project" value="TreeGrafter"/>
</dbReference>
<dbReference type="CDD" id="cd01401">
    <property type="entry name" value="PncB_like"/>
    <property type="match status" value="1"/>
</dbReference>
<dbReference type="Gene3D" id="3.20.140.10">
    <property type="entry name" value="nicotinate phosphoribosyltransferase"/>
    <property type="match status" value="1"/>
</dbReference>
<dbReference type="HAMAP" id="MF_00570">
    <property type="entry name" value="NAPRTase"/>
    <property type="match status" value="1"/>
</dbReference>
<dbReference type="InterPro" id="IPR041525">
    <property type="entry name" value="N/Namide_PRibTrfase"/>
</dbReference>
<dbReference type="InterPro" id="IPR040727">
    <property type="entry name" value="NAPRTase_N"/>
</dbReference>
<dbReference type="InterPro" id="IPR006406">
    <property type="entry name" value="Nic_PRibTrfase"/>
</dbReference>
<dbReference type="InterPro" id="IPR007229">
    <property type="entry name" value="Nic_PRibTrfase-Fam"/>
</dbReference>
<dbReference type="InterPro" id="IPR036068">
    <property type="entry name" value="Nicotinate_pribotase-like_C"/>
</dbReference>
<dbReference type="NCBIfam" id="TIGR01514">
    <property type="entry name" value="NAPRTase"/>
    <property type="match status" value="1"/>
</dbReference>
<dbReference type="NCBIfam" id="NF003704">
    <property type="entry name" value="PRK05321.1"/>
    <property type="match status" value="1"/>
</dbReference>
<dbReference type="PANTHER" id="PTHR11098">
    <property type="entry name" value="NICOTINATE PHOSPHORIBOSYLTRANSFERASE"/>
    <property type="match status" value="1"/>
</dbReference>
<dbReference type="PANTHER" id="PTHR11098:SF1">
    <property type="entry name" value="NICOTINATE PHOSPHORIBOSYLTRANSFERASE"/>
    <property type="match status" value="1"/>
</dbReference>
<dbReference type="Pfam" id="PF04095">
    <property type="entry name" value="NAPRTase"/>
    <property type="match status" value="1"/>
</dbReference>
<dbReference type="Pfam" id="PF17767">
    <property type="entry name" value="NAPRTase_N"/>
    <property type="match status" value="1"/>
</dbReference>
<dbReference type="PIRSF" id="PIRSF000484">
    <property type="entry name" value="NAPRT"/>
    <property type="match status" value="1"/>
</dbReference>
<dbReference type="SUPFAM" id="SSF51690">
    <property type="entry name" value="Nicotinate/Quinolinate PRTase C-terminal domain-like"/>
    <property type="match status" value="1"/>
</dbReference>
<dbReference type="SUPFAM" id="SSF54675">
    <property type="entry name" value="Nicotinate/Quinolinate PRTase N-terminal domain-like"/>
    <property type="match status" value="1"/>
</dbReference>
<keyword id="KW-0436">Ligase</keyword>
<keyword id="KW-0597">Phosphoprotein</keyword>
<keyword id="KW-0662">Pyridine nucleotide biosynthesis</keyword>
<comment type="function">
    <text evidence="1">Catalyzes the synthesis of beta-nicotinate D-ribonucleotide from nicotinate and 5-phospho-D-ribose 1-phosphate at the expense of ATP.</text>
</comment>
<comment type="catalytic activity">
    <reaction evidence="1">
        <text>nicotinate + 5-phospho-alpha-D-ribose 1-diphosphate + ATP + H2O = nicotinate beta-D-ribonucleotide + ADP + phosphate + diphosphate</text>
        <dbReference type="Rhea" id="RHEA:36163"/>
        <dbReference type="ChEBI" id="CHEBI:15377"/>
        <dbReference type="ChEBI" id="CHEBI:30616"/>
        <dbReference type="ChEBI" id="CHEBI:32544"/>
        <dbReference type="ChEBI" id="CHEBI:33019"/>
        <dbReference type="ChEBI" id="CHEBI:43474"/>
        <dbReference type="ChEBI" id="CHEBI:57502"/>
        <dbReference type="ChEBI" id="CHEBI:58017"/>
        <dbReference type="ChEBI" id="CHEBI:456216"/>
        <dbReference type="EC" id="6.3.4.21"/>
    </reaction>
</comment>
<comment type="pathway">
    <text evidence="1">Cofactor biosynthesis; NAD(+) biosynthesis; nicotinate D-ribonucleotide from nicotinate: step 1/1.</text>
</comment>
<comment type="PTM">
    <text evidence="1">Transiently phosphorylated on a His residue during the reaction cycle. Phosphorylation strongly increases the affinity for substrates and increases the rate of nicotinate D-ribonucleotide production. Dephosphorylation regenerates the low-affinity form of the enzyme, leading to product release.</text>
</comment>
<comment type="similarity">
    <text evidence="1">Belongs to the NAPRTase family.</text>
</comment>
<protein>
    <recommendedName>
        <fullName evidence="1">Nicotinate phosphoribosyltransferase</fullName>
        <shortName evidence="1">NAPRTase</shortName>
        <ecNumber evidence="1">6.3.4.21</ecNumber>
    </recommendedName>
</protein>
<proteinExistence type="inferred from homology"/>
<name>PNCB_RALPJ</name>
<evidence type="ECO:0000255" key="1">
    <source>
        <dbReference type="HAMAP-Rule" id="MF_00570"/>
    </source>
</evidence>
<accession>B2U8V2</accession>
<feature type="chain" id="PRO_1000129479" description="Nicotinate phosphoribosyltransferase">
    <location>
        <begin position="1"/>
        <end position="389"/>
    </location>
</feature>
<feature type="modified residue" description="Phosphohistidine; by autocatalysis" evidence="1">
    <location>
        <position position="216"/>
    </location>
</feature>
<reference key="1">
    <citation type="submission" date="2008-05" db="EMBL/GenBank/DDBJ databases">
        <title>Complete sequence of chromosome 1 of Ralstonia pickettii 12J.</title>
        <authorList>
            <person name="Lucas S."/>
            <person name="Copeland A."/>
            <person name="Lapidus A."/>
            <person name="Glavina del Rio T."/>
            <person name="Dalin E."/>
            <person name="Tice H."/>
            <person name="Bruce D."/>
            <person name="Goodwin L."/>
            <person name="Pitluck S."/>
            <person name="Meincke L."/>
            <person name="Brettin T."/>
            <person name="Detter J.C."/>
            <person name="Han C."/>
            <person name="Kuske C.R."/>
            <person name="Schmutz J."/>
            <person name="Larimer F."/>
            <person name="Land M."/>
            <person name="Hauser L."/>
            <person name="Kyrpides N."/>
            <person name="Mikhailova N."/>
            <person name="Marsh T."/>
            <person name="Richardson P."/>
        </authorList>
    </citation>
    <scope>NUCLEOTIDE SEQUENCE [LARGE SCALE GENOMIC DNA]</scope>
    <source>
        <strain>12J</strain>
    </source>
</reference>
<sequence length="389" mass="44841">MIIRSLLDTDLYKFTMMQVVLHHFPGAHVEYRFKCRNAGVDLVPFIEEIRAEIRHLCTLRFTDTELDYLRGMRFIKSDFVDFLGLFHLNEKYIDVRPAPSNDGQIEIVIAGPWLHTIMFEVPVLAIVNEVFFSRTQTHPQWEEGKRRLTDKLASLKRPGLEDCRIADYGTRRRFSHTWHEHVLLETHAQLGAQYAGTSNVYFAMKHGMTPLGTMAHEYLQACQALGPRLRDSQTFALETWAKEYRGDLGIALSDTYGFDAFLRDFDMFFCKLFDGVRHDSGDPFEWGERMLKHYDDMRAEPKSKALIFSDSLDMPKVIGLYERFHGRCKLAFGVGTNLTNDLGYTPLQIVIKIVRCNGQPVAKLSDAPEKTMCDDPAYLTYLKQVFGVQ</sequence>
<organism>
    <name type="scientific">Ralstonia pickettii (strain 12J)</name>
    <dbReference type="NCBI Taxonomy" id="402626"/>
    <lineage>
        <taxon>Bacteria</taxon>
        <taxon>Pseudomonadati</taxon>
        <taxon>Pseudomonadota</taxon>
        <taxon>Betaproteobacteria</taxon>
        <taxon>Burkholderiales</taxon>
        <taxon>Burkholderiaceae</taxon>
        <taxon>Ralstonia</taxon>
    </lineage>
</organism>